<reference key="1">
    <citation type="journal article" date="2003" name="Proc. Natl. Acad. Sci. U.S.A.">
        <title>The complete genome sequence of Mycobacterium bovis.</title>
        <authorList>
            <person name="Garnier T."/>
            <person name="Eiglmeier K."/>
            <person name="Camus J.-C."/>
            <person name="Medina N."/>
            <person name="Mansoor H."/>
            <person name="Pryor M."/>
            <person name="Duthoy S."/>
            <person name="Grondin S."/>
            <person name="Lacroix C."/>
            <person name="Monsempe C."/>
            <person name="Simon S."/>
            <person name="Harris B."/>
            <person name="Atkin R."/>
            <person name="Doggett J."/>
            <person name="Mayes R."/>
            <person name="Keating L."/>
            <person name="Wheeler P.R."/>
            <person name="Parkhill J."/>
            <person name="Barrell B.G."/>
            <person name="Cole S.T."/>
            <person name="Gordon S.V."/>
            <person name="Hewinson R.G."/>
        </authorList>
    </citation>
    <scope>NUCLEOTIDE SEQUENCE [LARGE SCALE GENOMIC DNA]</scope>
    <source>
        <strain>ATCC BAA-935 / AF2122/97</strain>
    </source>
</reference>
<reference key="2">
    <citation type="journal article" date="2017" name="Genome Announc.">
        <title>Updated reference genome sequence and annotation of Mycobacterium bovis AF2122/97.</title>
        <authorList>
            <person name="Malone K.M."/>
            <person name="Farrell D."/>
            <person name="Stuber T.P."/>
            <person name="Schubert O.T."/>
            <person name="Aebersold R."/>
            <person name="Robbe-Austerman S."/>
            <person name="Gordon S.V."/>
        </authorList>
    </citation>
    <scope>NUCLEOTIDE SEQUENCE [LARGE SCALE GENOMIC DNA]</scope>
    <scope>GENOME REANNOTATION</scope>
    <source>
        <strain>ATCC BAA-935 / AF2122/97</strain>
    </source>
</reference>
<gene>
    <name type="primary">rodA</name>
    <name type="ordered locus">BQ2027_MB0017C</name>
</gene>
<proteinExistence type="inferred from homology"/>
<organism>
    <name type="scientific">Mycobacterium bovis (strain ATCC BAA-935 / AF2122/97)</name>
    <dbReference type="NCBI Taxonomy" id="233413"/>
    <lineage>
        <taxon>Bacteria</taxon>
        <taxon>Bacillati</taxon>
        <taxon>Actinomycetota</taxon>
        <taxon>Actinomycetes</taxon>
        <taxon>Mycobacteriales</taxon>
        <taxon>Mycobacteriaceae</taxon>
        <taxon>Mycobacterium</taxon>
        <taxon>Mycobacterium tuberculosis complex</taxon>
    </lineage>
</organism>
<evidence type="ECO:0000250" key="1">
    <source>
        <dbReference type="UniProtKB" id="P9WN99"/>
    </source>
</evidence>
<evidence type="ECO:0000255" key="2"/>
<evidence type="ECO:0000305" key="3"/>
<dbReference type="EC" id="2.4.99.28" evidence="1"/>
<dbReference type="EMBL" id="LT708304">
    <property type="protein sequence ID" value="SIT98362.1"/>
    <property type="molecule type" value="Genomic_DNA"/>
</dbReference>
<dbReference type="RefSeq" id="NP_853687.1">
    <property type="nucleotide sequence ID" value="NC_002945.3"/>
</dbReference>
<dbReference type="RefSeq" id="WP_003400364.1">
    <property type="nucleotide sequence ID" value="NC_002945.4"/>
</dbReference>
<dbReference type="SMR" id="P63761"/>
<dbReference type="KEGG" id="mbo:BQ2027_MB0017C"/>
<dbReference type="PATRIC" id="fig|233413.5.peg.21"/>
<dbReference type="UniPathway" id="UPA00219"/>
<dbReference type="Proteomes" id="UP000001419">
    <property type="component" value="Chromosome"/>
</dbReference>
<dbReference type="GO" id="GO:0032153">
    <property type="term" value="C:cell division site"/>
    <property type="evidence" value="ECO:0007669"/>
    <property type="project" value="TreeGrafter"/>
</dbReference>
<dbReference type="GO" id="GO:0005886">
    <property type="term" value="C:plasma membrane"/>
    <property type="evidence" value="ECO:0007669"/>
    <property type="project" value="UniProtKB-SubCell"/>
</dbReference>
<dbReference type="GO" id="GO:0016757">
    <property type="term" value="F:glycosyltransferase activity"/>
    <property type="evidence" value="ECO:0007669"/>
    <property type="project" value="UniProtKB-KW"/>
</dbReference>
<dbReference type="GO" id="GO:0015648">
    <property type="term" value="F:lipid-linked peptidoglycan transporter activity"/>
    <property type="evidence" value="ECO:0007669"/>
    <property type="project" value="TreeGrafter"/>
</dbReference>
<dbReference type="GO" id="GO:0051301">
    <property type="term" value="P:cell division"/>
    <property type="evidence" value="ECO:0007669"/>
    <property type="project" value="InterPro"/>
</dbReference>
<dbReference type="GO" id="GO:0071555">
    <property type="term" value="P:cell wall organization"/>
    <property type="evidence" value="ECO:0007669"/>
    <property type="project" value="UniProtKB-KW"/>
</dbReference>
<dbReference type="GO" id="GO:0009252">
    <property type="term" value="P:peptidoglycan biosynthetic process"/>
    <property type="evidence" value="ECO:0007669"/>
    <property type="project" value="UniProtKB-UniPathway"/>
</dbReference>
<dbReference type="GO" id="GO:0008360">
    <property type="term" value="P:regulation of cell shape"/>
    <property type="evidence" value="ECO:0007669"/>
    <property type="project" value="UniProtKB-KW"/>
</dbReference>
<dbReference type="InterPro" id="IPR018365">
    <property type="entry name" value="Cell_cycle_FtsW-rel_CS"/>
</dbReference>
<dbReference type="InterPro" id="IPR001182">
    <property type="entry name" value="FtsW/RodA"/>
</dbReference>
<dbReference type="PANTHER" id="PTHR30474">
    <property type="entry name" value="CELL CYCLE PROTEIN"/>
    <property type="match status" value="1"/>
</dbReference>
<dbReference type="PANTHER" id="PTHR30474:SF3">
    <property type="entry name" value="PEPTIDOGLYCAN GLYCOSYLTRANSFERASE RODA"/>
    <property type="match status" value="1"/>
</dbReference>
<dbReference type="Pfam" id="PF01098">
    <property type="entry name" value="FTSW_RODA_SPOVE"/>
    <property type="match status" value="1"/>
</dbReference>
<dbReference type="PROSITE" id="PS00428">
    <property type="entry name" value="FTSW_RODA_SPOVE"/>
    <property type="match status" value="1"/>
</dbReference>
<keyword id="KW-0997">Cell inner membrane</keyword>
<keyword id="KW-1003">Cell membrane</keyword>
<keyword id="KW-0133">Cell shape</keyword>
<keyword id="KW-0961">Cell wall biogenesis/degradation</keyword>
<keyword id="KW-0328">Glycosyltransferase</keyword>
<keyword id="KW-0472">Membrane</keyword>
<keyword id="KW-0573">Peptidoglycan synthesis</keyword>
<keyword id="KW-1185">Reference proteome</keyword>
<keyword id="KW-0808">Transferase</keyword>
<keyword id="KW-0812">Transmembrane</keyword>
<keyword id="KW-1133">Transmembrane helix</keyword>
<name>RODA_MYCBO</name>
<comment type="function">
    <text evidence="1">Transglycosylase involved in peptidoglycan cell wall formation. Required for the regulation of cell length.</text>
</comment>
<comment type="catalytic activity">
    <reaction evidence="1">
        <text>[GlcNAc-(1-&gt;4)-Mur2Ac(oyl-L-Ala-gamma-D-Glu-L-Lys-D-Ala-D-Ala)](n)-di-trans,octa-cis-undecaprenyl diphosphate + beta-D-GlcNAc-(1-&gt;4)-Mur2Ac(oyl-L-Ala-gamma-D-Glu-L-Lys-D-Ala-D-Ala)-di-trans,octa-cis-undecaprenyl diphosphate = [GlcNAc-(1-&gt;4)-Mur2Ac(oyl-L-Ala-gamma-D-Glu-L-Lys-D-Ala-D-Ala)](n+1)-di-trans,octa-cis-undecaprenyl diphosphate + di-trans,octa-cis-undecaprenyl diphosphate + H(+)</text>
        <dbReference type="Rhea" id="RHEA:23708"/>
        <dbReference type="Rhea" id="RHEA-COMP:9602"/>
        <dbReference type="Rhea" id="RHEA-COMP:9603"/>
        <dbReference type="ChEBI" id="CHEBI:15378"/>
        <dbReference type="ChEBI" id="CHEBI:58405"/>
        <dbReference type="ChEBI" id="CHEBI:60033"/>
        <dbReference type="ChEBI" id="CHEBI:78435"/>
        <dbReference type="EC" id="2.4.99.28"/>
    </reaction>
</comment>
<comment type="pathway">
    <text evidence="1">Cell wall biogenesis; peptidoglycan biosynthesis.</text>
</comment>
<comment type="subcellular location">
    <subcellularLocation>
        <location evidence="1">Cell inner membrane</location>
        <topology evidence="2">Multi-pass membrane protein</topology>
    </subcellularLocation>
</comment>
<comment type="similarity">
    <text evidence="3">Belongs to the SEDS family.</text>
</comment>
<feature type="chain" id="PRO_0000062711" description="Peptidoglycan glycosyltransferase RodA">
    <location>
        <begin position="1"/>
        <end position="469"/>
    </location>
</feature>
<feature type="transmembrane region" description="Helical" evidence="2">
    <location>
        <begin position="20"/>
        <end position="40"/>
    </location>
</feature>
<feature type="transmembrane region" description="Helical" evidence="2">
    <location>
        <begin position="50"/>
        <end position="70"/>
    </location>
</feature>
<feature type="transmembrane region" description="Helical" evidence="2">
    <location>
        <begin position="76"/>
        <end position="96"/>
    </location>
</feature>
<feature type="transmembrane region" description="Helical" evidence="2">
    <location>
        <begin position="115"/>
        <end position="135"/>
    </location>
</feature>
<feature type="transmembrane region" description="Helical" evidence="2">
    <location>
        <begin position="146"/>
        <end position="166"/>
    </location>
</feature>
<feature type="transmembrane region" description="Helical" evidence="2">
    <location>
        <begin position="183"/>
        <end position="203"/>
    </location>
</feature>
<feature type="transmembrane region" description="Helical" evidence="2">
    <location>
        <begin position="226"/>
        <end position="246"/>
    </location>
</feature>
<feature type="transmembrane region" description="Helical" evidence="2">
    <location>
        <begin position="248"/>
        <end position="264"/>
    </location>
</feature>
<feature type="transmembrane region" description="Helical" evidence="2">
    <location>
        <begin position="267"/>
        <end position="287"/>
    </location>
</feature>
<feature type="transmembrane region" description="Helical" evidence="2">
    <location>
        <begin position="312"/>
        <end position="332"/>
    </location>
</feature>
<feature type="transmembrane region" description="Helical" evidence="2">
    <location>
        <begin position="344"/>
        <end position="364"/>
    </location>
</feature>
<feature type="transmembrane region" description="Helical" evidence="2">
    <location>
        <begin position="386"/>
        <end position="406"/>
    </location>
</feature>
<feature type="transmembrane region" description="Helical" evidence="2">
    <location>
        <begin position="418"/>
        <end position="438"/>
    </location>
</feature>
<sequence length="469" mass="50611">MTTRLQAPVAVTPPLPTRRNAELLLLCFAAVITFAALLVVQANQDQGVPWDLTSYGLAFLTLFGSAHLAIRRFAPYTDPLLLPVVALLNGLGLVMIHRLDLVDNEIGEHRHPSANQQMLWTLVGVAAFALVVTFLKDHRQLARYGYICGLAGLVFLAVPALLPAALSEQNGAKIWIRLPGFSIQPAEFSKILLLIFFSAVLVAKRGLFTSAGKHLLGMTLPRPRDLAPLLAAWVISVGVMVFEKDLGASLLLYTSFLVVVYLATQRFSWVVIGLTLFAAGTLVAYFIFEHVRLRVQTWLDPFADPDGTGYQIVQSLFSFATGGIFGTGLGNGQPDTVPAASTDFIIAAFGEELGLVGLTAILMLYTIVIIRGLRTAIATRDSFGKLLAAGLSSTLAIQLFIVVGGVTRLIPLTGLTTPWMSYGGSSLLANYILLAILARISHGARRPLRTRPRNKSPITAAGTEVIERV</sequence>
<protein>
    <recommendedName>
        <fullName evidence="1">Peptidoglycan glycosyltransferase RodA</fullName>
        <ecNumber evidence="1">2.4.99.28</ecNumber>
    </recommendedName>
    <alternativeName>
        <fullName evidence="1">Non-canonical transglycosylase RodA</fullName>
    </alternativeName>
</protein>
<accession>P63761</accession>
<accession>A0A1R3XWA3</accession>
<accession>P71587</accession>
<accession>X2BDS4</accession>